<gene>
    <name evidence="1" type="primary">psb30</name>
    <name evidence="1" type="synonym">ycf12</name>
</gene>
<geneLocation type="chloroplast"/>
<accession>Q9MS75</accession>
<keyword id="KW-0150">Chloroplast</keyword>
<keyword id="KW-0472">Membrane</keyword>
<keyword id="KW-0602">Photosynthesis</keyword>
<keyword id="KW-0604">Photosystem II</keyword>
<keyword id="KW-0934">Plastid</keyword>
<keyword id="KW-0793">Thylakoid</keyword>
<keyword id="KW-0812">Transmembrane</keyword>
<keyword id="KW-1133">Transmembrane helix</keyword>
<name>PSB30_EUGAN</name>
<protein>
    <recommendedName>
        <fullName evidence="1">Photosystem II reaction center protein Psb30</fullName>
    </recommendedName>
    <alternativeName>
        <fullName evidence="1">Photosystem II reaction center protein Ycf12</fullName>
    </alternativeName>
</protein>
<proteinExistence type="inferred from homology"/>
<evidence type="ECO:0000255" key="1">
    <source>
        <dbReference type="HAMAP-Rule" id="MF_01329"/>
    </source>
</evidence>
<evidence type="ECO:0000305" key="2"/>
<dbReference type="EMBL" id="AF241277">
    <property type="protein sequence ID" value="AAF82443.1"/>
    <property type="molecule type" value="Genomic_DNA"/>
</dbReference>
<dbReference type="RefSeq" id="YP_009144877.1">
    <property type="nucleotide sequence ID" value="NC_027269.1"/>
</dbReference>
<dbReference type="SMR" id="Q9MS75"/>
<dbReference type="GeneID" id="24573195"/>
<dbReference type="GO" id="GO:0009535">
    <property type="term" value="C:chloroplast thylakoid membrane"/>
    <property type="evidence" value="ECO:0007669"/>
    <property type="project" value="UniProtKB-SubCell"/>
</dbReference>
<dbReference type="GO" id="GO:0009523">
    <property type="term" value="C:photosystem II"/>
    <property type="evidence" value="ECO:0007669"/>
    <property type="project" value="UniProtKB-KW"/>
</dbReference>
<dbReference type="GO" id="GO:0015979">
    <property type="term" value="P:photosynthesis"/>
    <property type="evidence" value="ECO:0007669"/>
    <property type="project" value="UniProtKB-KW"/>
</dbReference>
<dbReference type="HAMAP" id="MF_01329">
    <property type="entry name" value="PSII_Psb30_Ycf12"/>
    <property type="match status" value="1"/>
</dbReference>
<dbReference type="InterPro" id="IPR010284">
    <property type="entry name" value="PSII_Ycf12_core-subunit"/>
</dbReference>
<dbReference type="NCBIfam" id="NF010239">
    <property type="entry name" value="PRK13686.1"/>
    <property type="match status" value="1"/>
</dbReference>
<dbReference type="Pfam" id="PF05969">
    <property type="entry name" value="PSII_Ycf12"/>
    <property type="match status" value="1"/>
</dbReference>
<sequence length="33" mass="3642">MNLELVVQLGSLLLITVAGPLIVFFLFIRQGNL</sequence>
<comment type="function">
    <text evidence="1">A core subunit of photosystem II (PSII), probably helps stabilize the reaction center.</text>
</comment>
<comment type="subunit">
    <text evidence="2">PSII is composed of 1 copy each of membrane proteins PsbA, PsbB, PsbC, PsbD, PsbE, PsbF, PsbH, PsbI, PsbJ, PsbK, PsbL, PsbM, PsbT, PsbY, PsbZ, Psb30/Ycf12, peripheral proteins of the oxygen-evolving complex and a large number of cofactors. It forms dimeric complexes.</text>
</comment>
<comment type="subcellular location">
    <subcellularLocation>
        <location evidence="1">Plastid</location>
        <location evidence="1">Chloroplast thylakoid membrane</location>
        <topology evidence="1">Single-pass membrane protein</topology>
    </subcellularLocation>
</comment>
<comment type="similarity">
    <text evidence="1">Belongs to the Psb30/Ycf12 family.</text>
</comment>
<reference key="1">
    <citation type="journal article" date="2001" name="Mol. Gen. Genet.">
        <title>Comparison of psbK operon organization and group III intron content in chloroplast genomes of 12 Euglenoid species.</title>
        <authorList>
            <person name="Doetsch N.A."/>
            <person name="Thompson M.D."/>
            <person name="Favreau M.R."/>
            <person name="Hallick R.B."/>
        </authorList>
    </citation>
    <scope>NUCLEOTIDE SEQUENCE [GENOMIC DNA]</scope>
    <source>
        <strain>UTEX 373</strain>
    </source>
</reference>
<organism>
    <name type="scientific">Euglena anabaena</name>
    <name type="common">Euglenaria anabaena</name>
    <dbReference type="NCBI Taxonomy" id="38273"/>
    <lineage>
        <taxon>Eukaryota</taxon>
        <taxon>Discoba</taxon>
        <taxon>Euglenozoa</taxon>
        <taxon>Euglenida</taxon>
        <taxon>Spirocuta</taxon>
        <taxon>Euglenophyceae</taxon>
        <taxon>Euglenales</taxon>
        <taxon>Euglenaceae</taxon>
        <taxon>Euglenaria</taxon>
    </lineage>
</organism>
<feature type="chain" id="PRO_0000059019" description="Photosystem II reaction center protein Psb30">
    <location>
        <begin position="1"/>
        <end position="33"/>
    </location>
</feature>
<feature type="transmembrane region" description="Helical" evidence="1">
    <location>
        <begin position="8"/>
        <end position="28"/>
    </location>
</feature>